<protein>
    <recommendedName>
        <fullName>Polyketide synthase 3</fullName>
        <shortName>RiPKS3</shortName>
        <ecNumber>2.3.1.74</ecNumber>
    </recommendedName>
    <alternativeName>
        <fullName>Naringenin-chalcone synthase PKS3</fullName>
    </alternativeName>
</protein>
<sequence length="391" mass="42822">MVTVDEVRKAQRAEGPATILAIGTATPPNCVDQSTYPDYYFRITKSEHRTELKEKFQRMCDKSRIKKRYMYLTEEILKENPSMCEYMAPSLDARQDMVVVEIPKLGKEAATKAIKEWGQLKSKITHLVFCTTSGVDMPGADYQLTKLLGLRPSVKRLMMYQQGCFAGGTVLRLAKDLAENNKGARVLAVCSEITAVTFRGPSDTHLDSLVGQALFGDGAAAIIVGSDPLPDIERPLFELVSAAQTILPDSDGAIDGHLREVGLTFHLLKDVPGLISKNIEKSLNEAFKPLDITDWNSLFWIAHPGGPAILDQVEAKLGLKPEKLEATRNILSEYGNMSSACVLFILDEVRRKSVANGHKTTGEGLEWGVLFGFGPGLTVETVVLHSVAAST</sequence>
<name>PKS3_RUBID</name>
<evidence type="ECO:0000250" key="1"/>
<evidence type="ECO:0000255" key="2">
    <source>
        <dbReference type="PROSITE-ProRule" id="PRU10023"/>
    </source>
</evidence>
<evidence type="ECO:0000269" key="3">
    <source>
    </source>
</evidence>
<evidence type="ECO:0000305" key="4"/>
<feature type="chain" id="PRO_0000424288" description="Polyketide synthase 3">
    <location>
        <begin position="1"/>
        <end position="391"/>
    </location>
</feature>
<feature type="active site" evidence="2">
    <location>
        <position position="164"/>
    </location>
</feature>
<comment type="function">
    <text evidence="3">Polyketide synthase producing p-coumaryltriacetic acid lactone (CTAL) and slightly naringenin chalcone. Can use p-coumaryl-CoA as substrate.</text>
</comment>
<comment type="catalytic activity">
    <reaction evidence="2 3">
        <text>(E)-4-coumaroyl-CoA + 3 malonyl-CoA + 3 H(+) = 2',4,4',6'-tetrahydroxychalcone + 3 CO2 + 4 CoA</text>
        <dbReference type="Rhea" id="RHEA:11128"/>
        <dbReference type="ChEBI" id="CHEBI:15378"/>
        <dbReference type="ChEBI" id="CHEBI:15413"/>
        <dbReference type="ChEBI" id="CHEBI:16526"/>
        <dbReference type="ChEBI" id="CHEBI:57287"/>
        <dbReference type="ChEBI" id="CHEBI:57384"/>
        <dbReference type="ChEBI" id="CHEBI:85008"/>
        <dbReference type="EC" id="2.3.1.74"/>
    </reaction>
</comment>
<comment type="pathway">
    <text>Secondary metabolite biosynthesis; flavonoid biosynthesis.</text>
</comment>
<comment type="subunit">
    <text evidence="1">Homodimer.</text>
</comment>
<comment type="similarity">
    <text evidence="4">Belongs to the thiolase-like superfamily. Chalcone/stilbene synthases family.</text>
</comment>
<dbReference type="EC" id="2.3.1.74"/>
<dbReference type="EMBL" id="AF292369">
    <property type="protein sequence ID" value="AAK15176.1"/>
    <property type="molecule type" value="Genomic_DNA"/>
</dbReference>
<dbReference type="SMR" id="Q9AU09"/>
<dbReference type="BioCyc" id="MetaCyc:MONOMER-15028"/>
<dbReference type="UniPathway" id="UPA00154"/>
<dbReference type="GO" id="GO:0016210">
    <property type="term" value="F:naringenin-chalcone synthase activity"/>
    <property type="evidence" value="ECO:0007669"/>
    <property type="project" value="UniProtKB-EC"/>
</dbReference>
<dbReference type="GO" id="GO:0042803">
    <property type="term" value="F:protein homodimerization activity"/>
    <property type="evidence" value="ECO:0000250"/>
    <property type="project" value="UniProtKB"/>
</dbReference>
<dbReference type="GO" id="GO:0009813">
    <property type="term" value="P:flavonoid biosynthetic process"/>
    <property type="evidence" value="ECO:0007669"/>
    <property type="project" value="UniProtKB-UniPathway"/>
</dbReference>
<dbReference type="GO" id="GO:0030639">
    <property type="term" value="P:polyketide biosynthetic process"/>
    <property type="evidence" value="ECO:0007669"/>
    <property type="project" value="TreeGrafter"/>
</dbReference>
<dbReference type="CDD" id="cd00831">
    <property type="entry name" value="CHS_like"/>
    <property type="match status" value="1"/>
</dbReference>
<dbReference type="FunFam" id="3.40.47.10:FF:000014">
    <property type="entry name" value="Chalcone synthase 1"/>
    <property type="match status" value="1"/>
</dbReference>
<dbReference type="FunFam" id="3.40.47.10:FF:000025">
    <property type="entry name" value="Chalcone synthase 2"/>
    <property type="match status" value="1"/>
</dbReference>
<dbReference type="Gene3D" id="3.40.47.10">
    <property type="match status" value="2"/>
</dbReference>
<dbReference type="InterPro" id="IPR012328">
    <property type="entry name" value="Chalcone/stilbene_synt_C"/>
</dbReference>
<dbReference type="InterPro" id="IPR001099">
    <property type="entry name" value="Chalcone/stilbene_synt_N"/>
</dbReference>
<dbReference type="InterPro" id="IPR018088">
    <property type="entry name" value="Chalcone/stilbene_synthase_AS"/>
</dbReference>
<dbReference type="InterPro" id="IPR011141">
    <property type="entry name" value="Polyketide_synthase_type-III"/>
</dbReference>
<dbReference type="InterPro" id="IPR016039">
    <property type="entry name" value="Thiolase-like"/>
</dbReference>
<dbReference type="PANTHER" id="PTHR11877:SF80">
    <property type="entry name" value="CHALCONE SYNTHASE 1"/>
    <property type="match status" value="1"/>
</dbReference>
<dbReference type="PANTHER" id="PTHR11877">
    <property type="entry name" value="HYDROXYMETHYLGLUTARYL-COA SYNTHASE"/>
    <property type="match status" value="1"/>
</dbReference>
<dbReference type="Pfam" id="PF02797">
    <property type="entry name" value="Chal_sti_synt_C"/>
    <property type="match status" value="1"/>
</dbReference>
<dbReference type="Pfam" id="PF00195">
    <property type="entry name" value="Chal_sti_synt_N"/>
    <property type="match status" value="1"/>
</dbReference>
<dbReference type="PIRSF" id="PIRSF000451">
    <property type="entry name" value="PKS_III"/>
    <property type="match status" value="1"/>
</dbReference>
<dbReference type="SUPFAM" id="SSF53901">
    <property type="entry name" value="Thiolase-like"/>
    <property type="match status" value="2"/>
</dbReference>
<dbReference type="PROSITE" id="PS00441">
    <property type="entry name" value="CHALCONE_SYNTH"/>
    <property type="match status" value="1"/>
</dbReference>
<reference key="1">
    <citation type="journal article" date="2001" name="Plant Mol. Biol.">
        <title>Molecular and biochemical characterization of three aromatic polyketide synthase genes from Rubus idaeus.</title>
        <authorList>
            <person name="Zheng D."/>
            <person name="Schroder G."/>
            <person name="Schroder J."/>
            <person name="Hrazdina G."/>
        </authorList>
    </citation>
    <scope>NUCLEOTIDE SEQUENCE [GENOMIC DNA]</scope>
    <scope>FUNCTION</scope>
    <scope>CATALYTIC ACTIVITY</scope>
    <source>
        <strain>cv. Royalty</strain>
    </source>
</reference>
<organism>
    <name type="scientific">Rubus idaeus</name>
    <name type="common">Raspberry</name>
    <dbReference type="NCBI Taxonomy" id="32247"/>
    <lineage>
        <taxon>Eukaryota</taxon>
        <taxon>Viridiplantae</taxon>
        <taxon>Streptophyta</taxon>
        <taxon>Embryophyta</taxon>
        <taxon>Tracheophyta</taxon>
        <taxon>Spermatophyta</taxon>
        <taxon>Magnoliopsida</taxon>
        <taxon>eudicotyledons</taxon>
        <taxon>Gunneridae</taxon>
        <taxon>Pentapetalae</taxon>
        <taxon>rosids</taxon>
        <taxon>fabids</taxon>
        <taxon>Rosales</taxon>
        <taxon>Rosaceae</taxon>
        <taxon>Rosoideae</taxon>
        <taxon>Rosoideae incertae sedis</taxon>
        <taxon>Rubus</taxon>
    </lineage>
</organism>
<accession>Q9AU09</accession>
<keyword id="KW-0012">Acyltransferase</keyword>
<keyword id="KW-0808">Transferase</keyword>
<proteinExistence type="evidence at protein level"/>
<gene>
    <name type="primary">PKS3</name>
</gene>